<comment type="function">
    <text evidence="3">Conjugation of reduced glutathione to a wide number of exogenous and endogenous hydrophobic electrophiles.</text>
</comment>
<comment type="catalytic activity">
    <reaction evidence="3">
        <text>RX + glutathione = an S-substituted glutathione + a halide anion + H(+)</text>
        <dbReference type="Rhea" id="RHEA:16437"/>
        <dbReference type="ChEBI" id="CHEBI:15378"/>
        <dbReference type="ChEBI" id="CHEBI:16042"/>
        <dbReference type="ChEBI" id="CHEBI:17792"/>
        <dbReference type="ChEBI" id="CHEBI:57925"/>
        <dbReference type="ChEBI" id="CHEBI:90779"/>
        <dbReference type="EC" id="2.5.1.18"/>
    </reaction>
</comment>
<comment type="subunit">
    <text evidence="2">Homodimer.</text>
</comment>
<comment type="subcellular location">
    <subcellularLocation>
        <location evidence="3">Cytoplasm</location>
    </subcellularLocation>
</comment>
<comment type="similarity">
    <text evidence="4">Belongs to the GST superfamily. Mu family.</text>
</comment>
<dbReference type="EC" id="2.5.1.18"/>
<dbReference type="SMR" id="P86214"/>
<dbReference type="Proteomes" id="UP000189706">
    <property type="component" value="Unplaced"/>
</dbReference>
<dbReference type="GO" id="GO:0005737">
    <property type="term" value="C:cytoplasm"/>
    <property type="evidence" value="ECO:0007669"/>
    <property type="project" value="UniProtKB-SubCell"/>
</dbReference>
<dbReference type="GO" id="GO:0004364">
    <property type="term" value="F:glutathione transferase activity"/>
    <property type="evidence" value="ECO:0000250"/>
    <property type="project" value="UniProtKB"/>
</dbReference>
<dbReference type="GO" id="GO:0006749">
    <property type="term" value="P:glutathione metabolic process"/>
    <property type="evidence" value="ECO:0000250"/>
    <property type="project" value="UniProtKB"/>
</dbReference>
<dbReference type="CDD" id="cd03075">
    <property type="entry name" value="GST_N_Mu"/>
    <property type="match status" value="1"/>
</dbReference>
<dbReference type="FunFam" id="1.20.1050.10:FF:000101">
    <property type="entry name" value="Glutathione S-transferase Mu 4"/>
    <property type="match status" value="1"/>
</dbReference>
<dbReference type="Gene3D" id="1.20.1050.10">
    <property type="match status" value="1"/>
</dbReference>
<dbReference type="Gene3D" id="3.40.30.10">
    <property type="entry name" value="Glutaredoxin"/>
    <property type="match status" value="1"/>
</dbReference>
<dbReference type="InterPro" id="IPR010987">
    <property type="entry name" value="Glutathione-S-Trfase_C-like"/>
</dbReference>
<dbReference type="InterPro" id="IPR036282">
    <property type="entry name" value="Glutathione-S-Trfase_C_sf"/>
</dbReference>
<dbReference type="InterPro" id="IPR004045">
    <property type="entry name" value="Glutathione_S-Trfase_N"/>
</dbReference>
<dbReference type="InterPro" id="IPR004046">
    <property type="entry name" value="GST_C"/>
</dbReference>
<dbReference type="InterPro" id="IPR003081">
    <property type="entry name" value="GST_mu"/>
</dbReference>
<dbReference type="InterPro" id="IPR050213">
    <property type="entry name" value="GST_superfamily"/>
</dbReference>
<dbReference type="InterPro" id="IPR036249">
    <property type="entry name" value="Thioredoxin-like_sf"/>
</dbReference>
<dbReference type="PANTHER" id="PTHR11571">
    <property type="entry name" value="GLUTATHIONE S-TRANSFERASE"/>
    <property type="match status" value="1"/>
</dbReference>
<dbReference type="PANTHER" id="PTHR11571:SF133">
    <property type="entry name" value="GLUTATHIONE S-TRANSFERASE MU 3"/>
    <property type="match status" value="1"/>
</dbReference>
<dbReference type="Pfam" id="PF00043">
    <property type="entry name" value="GST_C"/>
    <property type="match status" value="1"/>
</dbReference>
<dbReference type="Pfam" id="PF02798">
    <property type="entry name" value="GST_N"/>
    <property type="match status" value="1"/>
</dbReference>
<dbReference type="PRINTS" id="PR01267">
    <property type="entry name" value="GSTRNSFRASEM"/>
</dbReference>
<dbReference type="SUPFAM" id="SSF47616">
    <property type="entry name" value="GST C-terminal domain-like"/>
    <property type="match status" value="1"/>
</dbReference>
<dbReference type="SUPFAM" id="SSF52833">
    <property type="entry name" value="Thioredoxin-like"/>
    <property type="match status" value="1"/>
</dbReference>
<dbReference type="PROSITE" id="PS50405">
    <property type="entry name" value="GST_CTER"/>
    <property type="match status" value="1"/>
</dbReference>
<dbReference type="PROSITE" id="PS50404">
    <property type="entry name" value="GST_NTER"/>
    <property type="match status" value="1"/>
</dbReference>
<organism>
    <name type="scientific">Mesocricetus auratus</name>
    <name type="common">Golden hamster</name>
    <dbReference type="NCBI Taxonomy" id="10036"/>
    <lineage>
        <taxon>Eukaryota</taxon>
        <taxon>Metazoa</taxon>
        <taxon>Chordata</taxon>
        <taxon>Craniata</taxon>
        <taxon>Vertebrata</taxon>
        <taxon>Euteleostomi</taxon>
        <taxon>Mammalia</taxon>
        <taxon>Eutheria</taxon>
        <taxon>Euarchontoglires</taxon>
        <taxon>Glires</taxon>
        <taxon>Rodentia</taxon>
        <taxon>Myomorpha</taxon>
        <taxon>Muroidea</taxon>
        <taxon>Cricetidae</taxon>
        <taxon>Cricetinae</taxon>
        <taxon>Mesocricetus</taxon>
    </lineage>
</organism>
<name>GSTM5_MESAU</name>
<gene>
    <name evidence="3" type="primary">GSTM5</name>
</gene>
<keyword id="KW-0963">Cytoplasm</keyword>
<keyword id="KW-0597">Phosphoprotein</keyword>
<keyword id="KW-1185">Reference proteome</keyword>
<keyword id="KW-0808">Transferase</keyword>
<evidence type="ECO:0000250" key="1">
    <source>
        <dbReference type="UniProtKB" id="P08515"/>
    </source>
</evidence>
<evidence type="ECO:0000250" key="2">
    <source>
        <dbReference type="UniProtKB" id="P21266"/>
    </source>
</evidence>
<evidence type="ECO:0000250" key="3">
    <source>
        <dbReference type="UniProtKB" id="Q9Z1B2"/>
    </source>
</evidence>
<evidence type="ECO:0000255" key="4"/>
<evidence type="ECO:0000305" key="5"/>
<feature type="chain" id="PRO_0000394302" description="Glutathione S-transferase Mu 5">
    <location>
        <begin position="1"/>
        <end position="138" status="greater than"/>
    </location>
</feature>
<feature type="domain" description="GST N-terminal" evidence="3">
    <location>
        <begin position="1" status="less than"/>
        <end position="71" status="greater than"/>
    </location>
</feature>
<feature type="domain" description="GST C-terminal" evidence="3">
    <location>
        <begin position="72" status="less than"/>
        <end position="135"/>
    </location>
</feature>
<feature type="binding site" evidence="1">
    <location>
        <begin position="6"/>
        <end position="7"/>
    </location>
    <ligand>
        <name>glutathione</name>
        <dbReference type="ChEBI" id="CHEBI:57925"/>
    </ligand>
</feature>
<feature type="binding site" evidence="1">
    <location>
        <begin position="39"/>
        <end position="43"/>
    </location>
    <ligand>
        <name>glutathione</name>
        <dbReference type="ChEBI" id="CHEBI:57925"/>
    </ligand>
</feature>
<feature type="binding site" evidence="1">
    <location>
        <begin position="52"/>
        <end position="53"/>
    </location>
    <ligand>
        <name>glutathione</name>
        <dbReference type="ChEBI" id="CHEBI:57925"/>
    </ligand>
</feature>
<feature type="binding site" evidence="1">
    <location>
        <begin position="65"/>
        <end position="66"/>
    </location>
    <ligand>
        <name>glutathione</name>
        <dbReference type="ChEBI" id="CHEBI:57925"/>
    </ligand>
</feature>
<feature type="modified residue" description="Phosphoserine" evidence="3">
    <location>
        <position position="1"/>
    </location>
</feature>
<feature type="non-consecutive residues" evidence="5">
    <location>
        <begin position="10"/>
        <end position="11"/>
    </location>
</feature>
<feature type="non-consecutive residues" evidence="5">
    <location>
        <begin position="71"/>
        <end position="72"/>
    </location>
</feature>
<feature type="non-consecutive residues" evidence="5">
    <location>
        <begin position="85"/>
        <end position="86"/>
    </location>
</feature>
<feature type="non-consecutive residues" evidence="5">
    <location>
        <begin position="93"/>
        <end position="94"/>
    </location>
</feature>
<feature type="non-consecutive residues" evidence="5">
    <location>
        <begin position="129"/>
        <end position="130"/>
    </location>
</feature>
<feature type="non-terminal residue">
    <location>
        <position position="1"/>
    </location>
</feature>
<feature type="non-terminal residue">
    <location>
        <position position="138"/>
    </location>
</feature>
<accession>P86214</accession>
<sequence length="138" mass="16658">SMVLGYWDIRRMLLEFTDTSYEEKRYICGEAPDYDRSQWLDVKFKLDLDFPNLPYLMDGKNKITQSNAILRIRVDIMENQIMDFRQFSLFLGKKLTFVDFLTYDVLDQNRMFEPKCLDEFPNLKAFMCRCFKMPINNK</sequence>
<reference key="1">
    <citation type="journal article" date="2010" name="Asian J. Androl.">
        <title>Glucose-regulated protein precursor (GRP78) and tumor rejection antigen (GP96) are unique to hamster caput epididymal spermatozoa.</title>
        <authorList>
            <person name="Kameshwari D.B."/>
            <person name="Bhande S."/>
            <person name="Sundaram C.S."/>
            <person name="Kota V."/>
            <person name="Siva A.B."/>
            <person name="Shivaji S."/>
        </authorList>
    </citation>
    <scope>IDENTIFICATION BY MASS SPECTROMETRY</scope>
</reference>
<proteinExistence type="evidence at protein level"/>
<protein>
    <recommendedName>
        <fullName evidence="3">Glutathione S-transferase Mu 5</fullName>
        <ecNumber>2.5.1.18</ecNumber>
    </recommendedName>
    <alternativeName>
        <fullName evidence="3">GST class-mu 5</fullName>
    </alternativeName>
</protein>